<keyword id="KW-0186">Copper</keyword>
<keyword id="KW-0249">Electron transport</keyword>
<keyword id="KW-0460">Magnesium</keyword>
<keyword id="KW-0472">Membrane</keyword>
<keyword id="KW-0479">Metal-binding</keyword>
<keyword id="KW-0496">Mitochondrion</keyword>
<keyword id="KW-0999">Mitochondrion inner membrane</keyword>
<keyword id="KW-1185">Reference proteome</keyword>
<keyword id="KW-0679">Respiratory chain</keyword>
<keyword id="KW-1278">Translocase</keyword>
<keyword id="KW-0812">Transmembrane</keyword>
<keyword id="KW-1133">Transmembrane helix</keyword>
<keyword id="KW-0813">Transport</keyword>
<organism>
    <name type="scientific">Glycine max</name>
    <name type="common">Soybean</name>
    <name type="synonym">Glycine hispida</name>
    <dbReference type="NCBI Taxonomy" id="3847"/>
    <lineage>
        <taxon>Eukaryota</taxon>
        <taxon>Viridiplantae</taxon>
        <taxon>Streptophyta</taxon>
        <taxon>Embryophyta</taxon>
        <taxon>Tracheophyta</taxon>
        <taxon>Spermatophyta</taxon>
        <taxon>Magnoliopsida</taxon>
        <taxon>eudicotyledons</taxon>
        <taxon>Gunneridae</taxon>
        <taxon>Pentapetalae</taxon>
        <taxon>rosids</taxon>
        <taxon>fabids</taxon>
        <taxon>Fabales</taxon>
        <taxon>Fabaceae</taxon>
        <taxon>Papilionoideae</taxon>
        <taxon>50 kb inversion clade</taxon>
        <taxon>NPAAA clade</taxon>
        <taxon>indigoferoid/millettioid clade</taxon>
        <taxon>Phaseoleae</taxon>
        <taxon>Glycine</taxon>
        <taxon>Glycine subgen. Soja</taxon>
    </lineage>
</organism>
<protein>
    <recommendedName>
        <fullName>Cytochrome c oxidase subunit 2</fullName>
        <ecNumber>7.1.1.9</ecNumber>
    </recommendedName>
    <alternativeName>
        <fullName>Cytochrome c oxidase polypeptide II</fullName>
    </alternativeName>
</protein>
<proteinExistence type="inferred from homology"/>
<dbReference type="EC" id="7.1.1.9"/>
<dbReference type="EMBL" id="X04825">
    <property type="protein sequence ID" value="CAA28508.1"/>
    <property type="molecule type" value="Genomic_DNA"/>
</dbReference>
<dbReference type="EMBL" id="JX463295">
    <property type="protein sequence ID" value="AFR34332.1"/>
    <property type="molecule type" value="Genomic_DNA"/>
</dbReference>
<dbReference type="PIR" id="S07169">
    <property type="entry name" value="S07169"/>
</dbReference>
<dbReference type="RefSeq" id="YP_007516925.1">
    <property type="nucleotide sequence ID" value="NC_020455.1"/>
</dbReference>
<dbReference type="SMR" id="P05491"/>
<dbReference type="FunCoup" id="P05491">
    <property type="interactions" value="196"/>
</dbReference>
<dbReference type="STRING" id="3847.P05491"/>
<dbReference type="GeneID" id="15308623"/>
<dbReference type="KEGG" id="gmx:15308623"/>
<dbReference type="InParanoid" id="P05491"/>
<dbReference type="Proteomes" id="UP000008827">
    <property type="component" value="Mitochondrion"/>
</dbReference>
<dbReference type="GO" id="GO:0005743">
    <property type="term" value="C:mitochondrial inner membrane"/>
    <property type="evidence" value="ECO:0007669"/>
    <property type="project" value="UniProtKB-SubCell"/>
</dbReference>
<dbReference type="GO" id="GO:0005507">
    <property type="term" value="F:copper ion binding"/>
    <property type="evidence" value="ECO:0007669"/>
    <property type="project" value="InterPro"/>
</dbReference>
<dbReference type="GO" id="GO:0004129">
    <property type="term" value="F:cytochrome-c oxidase activity"/>
    <property type="evidence" value="ECO:0007669"/>
    <property type="project" value="UniProtKB-EC"/>
</dbReference>
<dbReference type="GO" id="GO:0042773">
    <property type="term" value="P:ATP synthesis coupled electron transport"/>
    <property type="evidence" value="ECO:0000318"/>
    <property type="project" value="GO_Central"/>
</dbReference>
<dbReference type="CDD" id="cd13912">
    <property type="entry name" value="CcO_II_C"/>
    <property type="match status" value="1"/>
</dbReference>
<dbReference type="FunFam" id="1.10.287.90:FF:000004">
    <property type="entry name" value="Cytochrome c oxidase subunit 2"/>
    <property type="match status" value="1"/>
</dbReference>
<dbReference type="FunFam" id="2.60.40.420:FF:000001">
    <property type="entry name" value="Cytochrome c oxidase subunit 2"/>
    <property type="match status" value="1"/>
</dbReference>
<dbReference type="Gene3D" id="1.10.287.90">
    <property type="match status" value="1"/>
</dbReference>
<dbReference type="Gene3D" id="2.60.40.420">
    <property type="entry name" value="Cupredoxins - blue copper proteins"/>
    <property type="match status" value="1"/>
</dbReference>
<dbReference type="InterPro" id="IPR045187">
    <property type="entry name" value="CcO_II"/>
</dbReference>
<dbReference type="InterPro" id="IPR002429">
    <property type="entry name" value="CcO_II-like_C"/>
</dbReference>
<dbReference type="InterPro" id="IPR034210">
    <property type="entry name" value="CcO_II_C"/>
</dbReference>
<dbReference type="InterPro" id="IPR008972">
    <property type="entry name" value="Cupredoxin"/>
</dbReference>
<dbReference type="InterPro" id="IPR014222">
    <property type="entry name" value="Cyt_c_oxidase_su2"/>
</dbReference>
<dbReference type="InterPro" id="IPR011759">
    <property type="entry name" value="Cyt_c_oxidase_su2_TM_dom"/>
</dbReference>
<dbReference type="InterPro" id="IPR036257">
    <property type="entry name" value="Cyt_c_oxidase_su2_TM_sf"/>
</dbReference>
<dbReference type="NCBIfam" id="TIGR02866">
    <property type="entry name" value="CoxB"/>
    <property type="match status" value="1"/>
</dbReference>
<dbReference type="PANTHER" id="PTHR22888:SF9">
    <property type="entry name" value="CYTOCHROME C OXIDASE SUBUNIT 2"/>
    <property type="match status" value="1"/>
</dbReference>
<dbReference type="PANTHER" id="PTHR22888">
    <property type="entry name" value="CYTOCHROME C OXIDASE, SUBUNIT II"/>
    <property type="match status" value="1"/>
</dbReference>
<dbReference type="Pfam" id="PF00116">
    <property type="entry name" value="COX2"/>
    <property type="match status" value="1"/>
</dbReference>
<dbReference type="Pfam" id="PF02790">
    <property type="entry name" value="COX2_TM"/>
    <property type="match status" value="1"/>
</dbReference>
<dbReference type="PRINTS" id="PR01166">
    <property type="entry name" value="CYCOXIDASEII"/>
</dbReference>
<dbReference type="SUPFAM" id="SSF49503">
    <property type="entry name" value="Cupredoxins"/>
    <property type="match status" value="1"/>
</dbReference>
<dbReference type="SUPFAM" id="SSF81464">
    <property type="entry name" value="Cytochrome c oxidase subunit II-like, transmembrane region"/>
    <property type="match status" value="1"/>
</dbReference>
<dbReference type="PROSITE" id="PS50857">
    <property type="entry name" value="COX2_CUA"/>
    <property type="match status" value="1"/>
</dbReference>
<dbReference type="PROSITE" id="PS50999">
    <property type="entry name" value="COX2_TM"/>
    <property type="match status" value="1"/>
</dbReference>
<name>COX2_SOYBN</name>
<geneLocation type="mitochondrion"/>
<feature type="chain" id="PRO_0000183693" description="Cytochrome c oxidase subunit 2">
    <location>
        <begin position="1"/>
        <end position="260"/>
    </location>
</feature>
<feature type="topological domain" description="Mitochondrial intermembrane" evidence="2">
    <location>
        <begin position="1"/>
        <end position="39"/>
    </location>
</feature>
<feature type="transmembrane region" description="Helical" evidence="2">
    <location>
        <begin position="40"/>
        <end position="61"/>
    </location>
</feature>
<feature type="topological domain" description="Mitochondrial matrix" evidence="2">
    <location>
        <begin position="62"/>
        <end position="76"/>
    </location>
</feature>
<feature type="transmembrane region" description="Helical" evidence="2">
    <location>
        <begin position="77"/>
        <end position="104"/>
    </location>
</feature>
<feature type="topological domain" description="Mitochondrial intermembrane" evidence="2">
    <location>
        <begin position="105"/>
        <end position="260"/>
    </location>
</feature>
<feature type="binding site" evidence="1">
    <location>
        <position position="186"/>
    </location>
    <ligand>
        <name>Cu cation</name>
        <dbReference type="ChEBI" id="CHEBI:23378"/>
        <label>A1</label>
    </ligand>
</feature>
<feature type="binding site" evidence="1">
    <location>
        <position position="221"/>
    </location>
    <ligand>
        <name>Cu cation</name>
        <dbReference type="ChEBI" id="CHEBI:23378"/>
        <label>A1</label>
    </ligand>
</feature>
<feature type="binding site" evidence="1">
    <location>
        <position position="221"/>
    </location>
    <ligand>
        <name>Cu cation</name>
        <dbReference type="ChEBI" id="CHEBI:23378"/>
        <label>A2</label>
    </ligand>
</feature>
<feature type="binding site" evidence="1">
    <location>
        <position position="223"/>
    </location>
    <ligand>
        <name>Cu cation</name>
        <dbReference type="ChEBI" id="CHEBI:23378"/>
        <label>A2</label>
    </ligand>
</feature>
<feature type="binding site" evidence="1">
    <location>
        <position position="223"/>
    </location>
    <ligand>
        <name>Mg(2+)</name>
        <dbReference type="ChEBI" id="CHEBI:18420"/>
        <note>ligand shared with subunit 1</note>
    </ligand>
</feature>
<feature type="binding site" evidence="1">
    <location>
        <position position="225"/>
    </location>
    <ligand>
        <name>Cu cation</name>
        <dbReference type="ChEBI" id="CHEBI:23378"/>
        <label>A1</label>
    </ligand>
</feature>
<feature type="binding site" evidence="1">
    <location>
        <position position="225"/>
    </location>
    <ligand>
        <name>Cu cation</name>
        <dbReference type="ChEBI" id="CHEBI:23378"/>
        <label>A2</label>
    </ligand>
</feature>
<feature type="binding site" evidence="1">
    <location>
        <position position="229"/>
    </location>
    <ligand>
        <name>Cu cation</name>
        <dbReference type="ChEBI" id="CHEBI:23378"/>
        <label>A2</label>
    </ligand>
</feature>
<evidence type="ECO:0000250" key="1">
    <source>
        <dbReference type="UniProtKB" id="P00410"/>
    </source>
</evidence>
<evidence type="ECO:0000255" key="2"/>
<evidence type="ECO:0000305" key="3"/>
<accession>P05491</accession>
<accession>M1FPH3</accession>
<sequence>MKFEWLFLTIAPCDAAEPWQLGFQDAATPMMQGIIDLHHDIFFFLILILVFVSRILVRALWHFHYKKNPIPQRIVHGTTIEILRTIFPSIIPMFIAIPSFALLYSMDEVVVDPAITIKAIGHQWYRTYEYSDYNSSDEQSLTFDSYTIPEDDLELGQSRLLEVDNRVVVPAKTHLRIIVTPADVPHSWAVPSLGVKCDAVPGRLNQISISVQREGVYYGQCSEICGTNHAFTPIVVEAVPSKDYGSRVFNQLIPQTTGEA</sequence>
<reference key="1">
    <citation type="journal article" date="1987" name="Curr. Genet.">
        <title>Cytochrome oxidase subunit II gene is adjacent to an initiator methionine tRNA gene in soybean mitochondrial DNA.</title>
        <authorList>
            <person name="Grabau E.A."/>
        </authorList>
    </citation>
    <scope>NUCLEOTIDE SEQUENCE [GENOMIC DNA]</scope>
</reference>
<reference key="2">
    <citation type="journal article" date="2013" name="PLoS ONE">
        <title>The mitochondrial genome of soybean reveals complex genome structures and gene evolution at intercellular and phylogenetic levels.</title>
        <authorList>
            <person name="Chang S."/>
            <person name="Wang Y."/>
            <person name="Lu J."/>
            <person name="Gai J."/>
            <person name="Li J."/>
            <person name="Chu P."/>
            <person name="Guan R."/>
            <person name="Zhao T."/>
        </authorList>
    </citation>
    <scope>NUCLEOTIDE SEQUENCE [LARGE SCALE GENOMIC DNA]</scope>
    <source>
        <strain>cv. Aiganhuang</strain>
        <tissue>Etiolated seedling</tissue>
    </source>
</reference>
<gene>
    <name type="primary">COX2</name>
    <name type="synonym">COII</name>
    <name type="synonym">COXII</name>
    <name type="ORF">GlmaxMp76</name>
</gene>
<comment type="function">
    <text evidence="1">Component of the cytochrome c oxidase, the last enzyme in the mitochondrial electron transport chain which drives oxidative phosphorylation. The respiratory chain contains 3 multisubunit complexes succinate dehydrogenase (complex II, CII), ubiquinol-cytochrome c oxidoreductase (cytochrome b-c1 complex, complex III, CIII) and cytochrome c oxidase (complex IV, CIV), that cooperate to transfer electrons derived from NADH and succinate to molecular oxygen, creating an electrochemical gradient over the inner membrane that drives transmembrane transport and the ATP synthase. Cytochrome c oxidase is the component of the respiratory chain that catalyzes the reduction of oxygen to water. Electrons originating from reduced cytochrome c in the intermembrane space (IMS) are transferred via the dinuclear copper A center (CU(A)) of subunit 2 and heme A of subunit 1 to the active site in subunit 1, a binuclear center (BNC) formed by heme A3 and copper B (CU(B)). The BNC reduces molecular oxygen to 2 water molecules using 4 electrons from cytochrome c in the IMS and 4 protons from the mitochondrial matrix.</text>
</comment>
<comment type="catalytic activity">
    <reaction evidence="1">
        <text>4 Fe(II)-[cytochrome c] + O2 + 8 H(+)(in) = 4 Fe(III)-[cytochrome c] + 2 H2O + 4 H(+)(out)</text>
        <dbReference type="Rhea" id="RHEA:11436"/>
        <dbReference type="Rhea" id="RHEA-COMP:10350"/>
        <dbReference type="Rhea" id="RHEA-COMP:14399"/>
        <dbReference type="ChEBI" id="CHEBI:15377"/>
        <dbReference type="ChEBI" id="CHEBI:15378"/>
        <dbReference type="ChEBI" id="CHEBI:15379"/>
        <dbReference type="ChEBI" id="CHEBI:29033"/>
        <dbReference type="ChEBI" id="CHEBI:29034"/>
        <dbReference type="EC" id="7.1.1.9"/>
    </reaction>
    <physiologicalReaction direction="left-to-right" evidence="1">
        <dbReference type="Rhea" id="RHEA:11437"/>
    </physiologicalReaction>
</comment>
<comment type="cofactor">
    <cofactor evidence="1">
        <name>Cu cation</name>
        <dbReference type="ChEBI" id="CHEBI:23378"/>
    </cofactor>
    <text evidence="1">Binds a dinuclear copper A center per subunit.</text>
</comment>
<comment type="subunit">
    <text evidence="1">Component of the cytochrome c oxidase (complex IV, CIV), a multisubunit enzyme composed of a catalytic core of 3 subunits and several supernumerary subunits. The complex exists as a monomer or a dimer and forms supercomplexes (SCs) in the inner mitochondrial membrane with ubiquinol-cytochrome c oxidoreductase (cytochrome b-c1 complex, complex III, CIII).</text>
</comment>
<comment type="subcellular location">
    <subcellularLocation>
        <location evidence="1">Mitochondrion inner membrane</location>
        <topology evidence="1">Multi-pass membrane protein</topology>
    </subcellularLocation>
</comment>
<comment type="miscellaneous">
    <text>The gene coding for this protein is probably silent. Soybean nuclear genome encode an active cox2.</text>
</comment>
<comment type="similarity">
    <text evidence="3">Belongs to the cytochrome c oxidase subunit 2 family.</text>
</comment>